<proteinExistence type="evidence at protein level"/>
<reference key="1">
    <citation type="journal article" date="2019" name="Toxins">
        <title>Isolation and characterization of insecticidal toxins from the venom of the North African scorpion, Buthacus leptochelys.</title>
        <authorList>
            <person name="Yoshimoto Y."/>
            <person name="Miyashita M."/>
            <person name="Abdel-Wahab M."/>
            <person name="Sarhan M."/>
            <person name="Nakagawa Y."/>
            <person name="Miyagawa H."/>
        </authorList>
    </citation>
    <scope>PROTEIN SEQUENCE</scope>
    <scope>FUNCTION</scope>
    <scope>BIOASSAY</scope>
    <scope>SUBCELLULAR LOCATION</scope>
    <scope>MASS SPECTROMETRY</scope>
    <source>
        <tissue>Venom</tissue>
    </source>
</reference>
<organism>
    <name type="scientific">Buthacus leptochelys</name>
    <name type="common">Egyptian fat-tailed scorpion</name>
    <name type="synonym">Androctonus leptochelys</name>
    <dbReference type="NCBI Taxonomy" id="2807509"/>
    <lineage>
        <taxon>Eukaryota</taxon>
        <taxon>Metazoa</taxon>
        <taxon>Ecdysozoa</taxon>
        <taxon>Arthropoda</taxon>
        <taxon>Chelicerata</taxon>
        <taxon>Arachnida</taxon>
        <taxon>Scorpiones</taxon>
        <taxon>Buthida</taxon>
        <taxon>Buthoidea</taxon>
        <taxon>Buthidae</taxon>
        <taxon>Buthacus</taxon>
    </lineage>
</organism>
<comment type="function">
    <text evidence="1 2">Excitatory insect beta-toxins induce a spastic paralysis. They bind voltage-independently at site-4 of sodium channels (Nav) and shift the voltage of activation toward more negative potentials thereby affecting sodium channel activation and promoting spontaneous and repetitive firing (By similarity). The fraction to which this protein belongs exhibits low toxicity and induces transient paralysis in all insects tested (the crickets A.domesticus) (PubMed:31027216).</text>
</comment>
<comment type="subcellular location">
    <subcellularLocation>
        <location evidence="2">Secreted</location>
    </subcellularLocation>
</comment>
<comment type="tissue specificity">
    <text evidence="5">Expressed by the venom gland.</text>
</comment>
<comment type="domain">
    <text evidence="4">Has the structural arrangement of an alpha-helix connected to antiparallel beta-sheets by disulfide bonds (CS-alpha/beta).</text>
</comment>
<comment type="mass spectrometry" mass="7828.1" method="MALDI" evidence="2">
    <text>Monoisotopic mass.</text>
</comment>
<comment type="similarity">
    <text evidence="4">Belongs to the long (4 C-C) scorpion toxin superfamily. Sodium channel inhibitor family. Beta subfamily.</text>
</comment>
<feature type="chain" id="PRO_0000459141" description="Toxin Bl-4" evidence="2">
    <location>
        <begin position="1"/>
        <end position="29" status="greater than"/>
    </location>
</feature>
<feature type="disulfide bond" evidence="4">
    <location>
        <begin position="16"/>
        <end status="unknown"/>
    </location>
</feature>
<feature type="disulfide bond" evidence="4">
    <location>
        <begin position="22"/>
        <end status="unknown"/>
    </location>
</feature>
<feature type="disulfide bond" evidence="4">
    <location>
        <begin position="26"/>
        <end status="unknown"/>
    </location>
</feature>
<feature type="non-terminal residue" evidence="5">
    <location>
        <position position="29"/>
    </location>
</feature>
<protein>
    <recommendedName>
        <fullName evidence="3">Toxin Bl-4</fullName>
    </recommendedName>
</protein>
<sequence length="29" mass="3120">XKNGYAVDSSGKAPECILSNYCNNECTKV</sequence>
<dbReference type="GO" id="GO:0005576">
    <property type="term" value="C:extracellular region"/>
    <property type="evidence" value="ECO:0007669"/>
    <property type="project" value="UniProtKB-SubCell"/>
</dbReference>
<dbReference type="GO" id="GO:0008200">
    <property type="term" value="F:ion channel inhibitor activity"/>
    <property type="evidence" value="ECO:0007669"/>
    <property type="project" value="InterPro"/>
</dbReference>
<dbReference type="GO" id="GO:0017080">
    <property type="term" value="F:sodium channel regulator activity"/>
    <property type="evidence" value="ECO:0007669"/>
    <property type="project" value="UniProtKB-KW"/>
</dbReference>
<dbReference type="GO" id="GO:0090729">
    <property type="term" value="F:toxin activity"/>
    <property type="evidence" value="ECO:0007669"/>
    <property type="project" value="UniProtKB-KW"/>
</dbReference>
<dbReference type="Gene3D" id="3.30.30.10">
    <property type="entry name" value="Knottin, scorpion toxin-like"/>
    <property type="match status" value="1"/>
</dbReference>
<dbReference type="InterPro" id="IPR044062">
    <property type="entry name" value="LCN-type_CS_alpha_beta_dom"/>
</dbReference>
<dbReference type="InterPro" id="IPR036574">
    <property type="entry name" value="Scorpion_toxin-like_sf"/>
</dbReference>
<dbReference type="SUPFAM" id="SSF57095">
    <property type="entry name" value="Scorpion toxin-like"/>
    <property type="match status" value="1"/>
</dbReference>
<keyword id="KW-0903">Direct protein sequencing</keyword>
<keyword id="KW-1015">Disulfide bond</keyword>
<keyword id="KW-0872">Ion channel impairing toxin</keyword>
<keyword id="KW-0528">Neurotoxin</keyword>
<keyword id="KW-0964">Secreted</keyword>
<keyword id="KW-0800">Toxin</keyword>
<keyword id="KW-0738">Voltage-gated sodium channel impairing toxin</keyword>
<name>TX4_BUTLE</name>
<accession>P0DX59</accession>
<evidence type="ECO:0000250" key="1">
    <source>
        <dbReference type="UniProtKB" id="P01497"/>
    </source>
</evidence>
<evidence type="ECO:0000269" key="2">
    <source>
    </source>
</evidence>
<evidence type="ECO:0000303" key="3">
    <source>
    </source>
</evidence>
<evidence type="ECO:0000305" key="4"/>
<evidence type="ECO:0000305" key="5">
    <source>
    </source>
</evidence>